<keyword id="KW-0004">4Fe-4S</keyword>
<keyword id="KW-0408">Iron</keyword>
<keyword id="KW-0411">Iron-sulfur</keyword>
<keyword id="KW-0456">Lyase</keyword>
<keyword id="KW-0479">Metal-binding</keyword>
<keyword id="KW-1185">Reference proteome</keyword>
<keyword id="KW-0949">S-adenosyl-L-methionine</keyword>
<keyword id="KW-0784">Thiamine biosynthesis</keyword>
<keyword id="KW-0862">Zinc</keyword>
<accession>A7I8Q1</accession>
<evidence type="ECO:0000255" key="1">
    <source>
        <dbReference type="HAMAP-Rule" id="MF_00089"/>
    </source>
</evidence>
<dbReference type="EC" id="4.1.99.17" evidence="1"/>
<dbReference type="EMBL" id="CP000780">
    <property type="protein sequence ID" value="ABS56112.1"/>
    <property type="molecule type" value="Genomic_DNA"/>
</dbReference>
<dbReference type="RefSeq" id="WP_012107156.1">
    <property type="nucleotide sequence ID" value="NC_009712.1"/>
</dbReference>
<dbReference type="SMR" id="A7I8Q1"/>
<dbReference type="STRING" id="456442.Mboo_1595"/>
<dbReference type="GeneID" id="5410909"/>
<dbReference type="KEGG" id="mbn:Mboo_1595"/>
<dbReference type="eggNOG" id="arCOG02741">
    <property type="taxonomic scope" value="Archaea"/>
</dbReference>
<dbReference type="HOGENOM" id="CLU_013181_2_2_2"/>
<dbReference type="OrthoDB" id="335406at2157"/>
<dbReference type="UniPathway" id="UPA00060"/>
<dbReference type="Proteomes" id="UP000002408">
    <property type="component" value="Chromosome"/>
</dbReference>
<dbReference type="GO" id="GO:0051539">
    <property type="term" value="F:4 iron, 4 sulfur cluster binding"/>
    <property type="evidence" value="ECO:0007669"/>
    <property type="project" value="UniProtKB-KW"/>
</dbReference>
<dbReference type="GO" id="GO:0016830">
    <property type="term" value="F:carbon-carbon lyase activity"/>
    <property type="evidence" value="ECO:0007669"/>
    <property type="project" value="InterPro"/>
</dbReference>
<dbReference type="GO" id="GO:0008270">
    <property type="term" value="F:zinc ion binding"/>
    <property type="evidence" value="ECO:0007669"/>
    <property type="project" value="UniProtKB-UniRule"/>
</dbReference>
<dbReference type="GO" id="GO:0009228">
    <property type="term" value="P:thiamine biosynthetic process"/>
    <property type="evidence" value="ECO:0007669"/>
    <property type="project" value="UniProtKB-KW"/>
</dbReference>
<dbReference type="GO" id="GO:0009229">
    <property type="term" value="P:thiamine diphosphate biosynthetic process"/>
    <property type="evidence" value="ECO:0007669"/>
    <property type="project" value="UniProtKB-UniRule"/>
</dbReference>
<dbReference type="Gene3D" id="6.10.250.620">
    <property type="match status" value="1"/>
</dbReference>
<dbReference type="Gene3D" id="3.20.20.540">
    <property type="entry name" value="Radical SAM ThiC family, central domain"/>
    <property type="match status" value="1"/>
</dbReference>
<dbReference type="HAMAP" id="MF_00089">
    <property type="entry name" value="ThiC"/>
    <property type="match status" value="1"/>
</dbReference>
<dbReference type="InterPro" id="IPR037509">
    <property type="entry name" value="ThiC"/>
</dbReference>
<dbReference type="InterPro" id="IPR038521">
    <property type="entry name" value="ThiC/Bza_core_dom"/>
</dbReference>
<dbReference type="InterPro" id="IPR002817">
    <property type="entry name" value="ThiC/BzaA/B"/>
</dbReference>
<dbReference type="NCBIfam" id="NF009895">
    <property type="entry name" value="PRK13352.1"/>
    <property type="match status" value="1"/>
</dbReference>
<dbReference type="NCBIfam" id="TIGR00190">
    <property type="entry name" value="thiC"/>
    <property type="match status" value="1"/>
</dbReference>
<dbReference type="PANTHER" id="PTHR30557:SF1">
    <property type="entry name" value="PHOSPHOMETHYLPYRIMIDINE SYNTHASE, CHLOROPLASTIC"/>
    <property type="match status" value="1"/>
</dbReference>
<dbReference type="PANTHER" id="PTHR30557">
    <property type="entry name" value="THIAMINE BIOSYNTHESIS PROTEIN THIC"/>
    <property type="match status" value="1"/>
</dbReference>
<dbReference type="Pfam" id="PF01964">
    <property type="entry name" value="ThiC_Rad_SAM"/>
    <property type="match status" value="1"/>
</dbReference>
<dbReference type="SFLD" id="SFLDF00407">
    <property type="entry name" value="phosphomethylpyrimidine_syntha"/>
    <property type="match status" value="1"/>
</dbReference>
<dbReference type="SFLD" id="SFLDG01114">
    <property type="entry name" value="phosphomethylpyrimidine_syntha"/>
    <property type="match status" value="1"/>
</dbReference>
<dbReference type="SFLD" id="SFLDS00113">
    <property type="entry name" value="Radical_SAM_Phosphomethylpyrim"/>
    <property type="match status" value="1"/>
</dbReference>
<organism>
    <name type="scientific">Methanoregula boonei (strain DSM 21154 / JCM 14090 / 6A8)</name>
    <dbReference type="NCBI Taxonomy" id="456442"/>
    <lineage>
        <taxon>Archaea</taxon>
        <taxon>Methanobacteriati</taxon>
        <taxon>Methanobacteriota</taxon>
        <taxon>Stenosarchaea group</taxon>
        <taxon>Methanomicrobia</taxon>
        <taxon>Methanomicrobiales</taxon>
        <taxon>Methanoregulaceae</taxon>
        <taxon>Methanoregula</taxon>
    </lineage>
</organism>
<reference key="1">
    <citation type="journal article" date="2015" name="Microbiology">
        <title>Genome of Methanoregula boonei 6A8 reveals adaptations to oligotrophic peatland environments.</title>
        <authorList>
            <person name="Braeuer S."/>
            <person name="Cadillo-Quiroz H."/>
            <person name="Kyrpides N."/>
            <person name="Woyke T."/>
            <person name="Goodwin L."/>
            <person name="Detter C."/>
            <person name="Podell S."/>
            <person name="Yavitt J.B."/>
            <person name="Zinder S.H."/>
        </authorList>
    </citation>
    <scope>NUCLEOTIDE SEQUENCE [LARGE SCALE GENOMIC DNA]</scope>
    <source>
        <strain>DSM 21154 / JCM 14090 / 6A8</strain>
    </source>
</reference>
<name>THIC_METB6</name>
<proteinExistence type="inferred from homology"/>
<sequence length="425" mass="46862">MSIIEDARHGIVTEEMKQVAKAEGVTEDFIRRSVAEGHIVIPVSPYRKVKICGIGEGLRTKVNASIGTSTDIVNIPEEIEKAKQAERAGADTLMELSTGGDFADIRRQIIANTTLSVGSVPLYQAFIEAVKKDGAVIHMKEDDLFRITAEQAKLGTNFMAIHTGINWETVKRLRNQGRHAGLVSRGGAFMTAWMLHNEKENPLYSEFDYLMEIMKEHEVTLSMGNGMRAGAIHDATDRAGIQELLINAELADKAHAKGIQVIVEGPGHVPIDEIATNVQLMKRVTNNKPFYMLGPIVTDIAPGYDDRVSAIGAAISSSLGADFICYVTPAEHLALPTPEEVYEGVISSRIAAHVGDMVKLKKVREADLEMGHARRDLDWERQFAVAMNPARARKIREERMPADTDGCTMCGDFCAIKIVNRYFKF</sequence>
<feature type="chain" id="PRO_1000004769" description="Phosphomethylpyrimidine synthase">
    <location>
        <begin position="1"/>
        <end position="425"/>
    </location>
</feature>
<feature type="binding site" evidence="1">
    <location>
        <position position="94"/>
    </location>
    <ligand>
        <name>substrate</name>
    </ligand>
</feature>
<feature type="binding site" evidence="1">
    <location>
        <position position="123"/>
    </location>
    <ligand>
        <name>substrate</name>
    </ligand>
</feature>
<feature type="binding site" evidence="1">
    <location>
        <position position="162"/>
    </location>
    <ligand>
        <name>substrate</name>
    </ligand>
</feature>
<feature type="binding site" evidence="1">
    <location>
        <begin position="184"/>
        <end position="186"/>
    </location>
    <ligand>
        <name>substrate</name>
    </ligand>
</feature>
<feature type="binding site" evidence="1">
    <location>
        <begin position="225"/>
        <end position="228"/>
    </location>
    <ligand>
        <name>substrate</name>
    </ligand>
</feature>
<feature type="binding site" evidence="1">
    <location>
        <position position="264"/>
    </location>
    <ligand>
        <name>substrate</name>
    </ligand>
</feature>
<feature type="binding site" evidence="1">
    <location>
        <position position="268"/>
    </location>
    <ligand>
        <name>Zn(2+)</name>
        <dbReference type="ChEBI" id="CHEBI:29105"/>
    </ligand>
</feature>
<feature type="binding site" evidence="1">
    <location>
        <position position="291"/>
    </location>
    <ligand>
        <name>substrate</name>
    </ligand>
</feature>
<feature type="binding site" evidence="1">
    <location>
        <position position="332"/>
    </location>
    <ligand>
        <name>Zn(2+)</name>
        <dbReference type="ChEBI" id="CHEBI:29105"/>
    </ligand>
</feature>
<feature type="binding site" evidence="1">
    <location>
        <position position="407"/>
    </location>
    <ligand>
        <name>[4Fe-4S] cluster</name>
        <dbReference type="ChEBI" id="CHEBI:49883"/>
        <note>4Fe-4S-S-AdoMet</note>
    </ligand>
</feature>
<feature type="binding site" evidence="1">
    <location>
        <position position="410"/>
    </location>
    <ligand>
        <name>[4Fe-4S] cluster</name>
        <dbReference type="ChEBI" id="CHEBI:49883"/>
        <note>4Fe-4S-S-AdoMet</note>
    </ligand>
</feature>
<feature type="binding site" evidence="1">
    <location>
        <position position="414"/>
    </location>
    <ligand>
        <name>[4Fe-4S] cluster</name>
        <dbReference type="ChEBI" id="CHEBI:49883"/>
        <note>4Fe-4S-S-AdoMet</note>
    </ligand>
</feature>
<protein>
    <recommendedName>
        <fullName evidence="1">Phosphomethylpyrimidine synthase</fullName>
        <ecNumber evidence="1">4.1.99.17</ecNumber>
    </recommendedName>
    <alternativeName>
        <fullName evidence="1">Hydroxymethylpyrimidine phosphate synthase</fullName>
        <shortName evidence="1">HMP-P synthase</shortName>
        <shortName evidence="1">HMP-phosphate synthase</shortName>
        <shortName evidence="1">HMPP synthase</shortName>
    </alternativeName>
    <alternativeName>
        <fullName evidence="1">Thiamine biosynthesis protein ThiC</fullName>
    </alternativeName>
</protein>
<gene>
    <name evidence="1" type="primary">thiC</name>
    <name type="ordered locus">Mboo_1595</name>
</gene>
<comment type="function">
    <text evidence="1">Catalyzes the synthesis of the hydroxymethylpyrimidine phosphate (HMP-P) moiety of thiamine from aminoimidazole ribotide (AIR) in a radical S-adenosyl-L-methionine (SAM)-dependent reaction.</text>
</comment>
<comment type="catalytic activity">
    <reaction evidence="1">
        <text>5-amino-1-(5-phospho-beta-D-ribosyl)imidazole + S-adenosyl-L-methionine = 4-amino-2-methyl-5-(phosphooxymethyl)pyrimidine + CO + 5'-deoxyadenosine + formate + L-methionine + 3 H(+)</text>
        <dbReference type="Rhea" id="RHEA:24840"/>
        <dbReference type="ChEBI" id="CHEBI:15378"/>
        <dbReference type="ChEBI" id="CHEBI:15740"/>
        <dbReference type="ChEBI" id="CHEBI:17245"/>
        <dbReference type="ChEBI" id="CHEBI:17319"/>
        <dbReference type="ChEBI" id="CHEBI:57844"/>
        <dbReference type="ChEBI" id="CHEBI:58354"/>
        <dbReference type="ChEBI" id="CHEBI:59789"/>
        <dbReference type="ChEBI" id="CHEBI:137981"/>
        <dbReference type="EC" id="4.1.99.17"/>
    </reaction>
</comment>
<comment type="cofactor">
    <cofactor evidence="1">
        <name>[4Fe-4S] cluster</name>
        <dbReference type="ChEBI" id="CHEBI:49883"/>
    </cofactor>
    <text evidence="1">Binds 1 [4Fe-4S] cluster per subunit. The cluster is coordinated with 3 cysteines and an exchangeable S-adenosyl-L-methionine.</text>
</comment>
<comment type="pathway">
    <text evidence="1">Cofactor biosynthesis; thiamine diphosphate biosynthesis.</text>
</comment>
<comment type="similarity">
    <text evidence="1">Belongs to the ThiC family.</text>
</comment>